<organism>
    <name type="scientific">Enterocytozoon bieneusi (strain H348)</name>
    <name type="common">Microsporidian parasite</name>
    <dbReference type="NCBI Taxonomy" id="481877"/>
    <lineage>
        <taxon>Eukaryota</taxon>
        <taxon>Fungi</taxon>
        <taxon>Fungi incertae sedis</taxon>
        <taxon>Microsporidia</taxon>
        <taxon>Enterocytozoonidae</taxon>
        <taxon>Enterocytozoon</taxon>
    </lineage>
</organism>
<protein>
    <recommendedName>
        <fullName evidence="1">Small ribosomal subunit protein eS1</fullName>
    </recommendedName>
    <alternativeName>
        <fullName evidence="2">40S ribosomal protein S1</fullName>
    </alternativeName>
</protein>
<comment type="subunit">
    <text evidence="1">Component of the small ribosomal subunit. Mature ribosomes consist of a small (40S) and a large (60S) subunit. The 40S subunit contains about 33 different proteins and 1 molecule of RNA (18S). The 60S subunit contains about 49 different proteins and 3 molecules of RNA (25S, 5.8S and 5S).</text>
</comment>
<comment type="subcellular location">
    <subcellularLocation>
        <location evidence="1">Cytoplasm</location>
    </subcellularLocation>
</comment>
<comment type="similarity">
    <text evidence="1">Belongs to the eukaryotic ribosomal protein eS1 family.</text>
</comment>
<dbReference type="EMBL" id="ABGB01001108">
    <property type="protein sequence ID" value="EED42069.1"/>
    <property type="molecule type" value="Genomic_DNA"/>
</dbReference>
<dbReference type="EMBL" id="ABGB01000977">
    <property type="protein sequence ID" value="EED42226.1"/>
    <property type="molecule type" value="Genomic_DNA"/>
</dbReference>
<dbReference type="EMBL" id="ABGB01000414">
    <property type="protein sequence ID" value="EED42895.1"/>
    <property type="molecule type" value="Genomic_DNA"/>
</dbReference>
<dbReference type="RefSeq" id="XP_002651160.1">
    <property type="nucleotide sequence ID" value="XM_002651114.1"/>
</dbReference>
<dbReference type="RefSeq" id="XP_002651831.1">
    <property type="nucleotide sequence ID" value="XM_002651785.1"/>
</dbReference>
<dbReference type="RefSeq" id="XP_002651986.1">
    <property type="nucleotide sequence ID" value="XM_002651940.1"/>
</dbReference>
<dbReference type="SMR" id="B7XMD2"/>
<dbReference type="FunCoup" id="B7XMD2">
    <property type="interactions" value="255"/>
</dbReference>
<dbReference type="STRING" id="481877.B7XMD2"/>
<dbReference type="VEuPathDB" id="MicrosporidiaDB:EBI_21835"/>
<dbReference type="VEuPathDB" id="MicrosporidiaDB:EBI_22052"/>
<dbReference type="VEuPathDB" id="MicrosporidiaDB:EBI_27299"/>
<dbReference type="HOGENOM" id="CLU_062507_0_2_1"/>
<dbReference type="InParanoid" id="B7XMD2"/>
<dbReference type="OMA" id="GEATNCD"/>
<dbReference type="OrthoDB" id="9834376at2759"/>
<dbReference type="GO" id="GO:0022627">
    <property type="term" value="C:cytosolic small ribosomal subunit"/>
    <property type="evidence" value="ECO:0007669"/>
    <property type="project" value="UniProtKB-UniRule"/>
</dbReference>
<dbReference type="GO" id="GO:0003735">
    <property type="term" value="F:structural constituent of ribosome"/>
    <property type="evidence" value="ECO:0007669"/>
    <property type="project" value="UniProtKB-UniRule"/>
</dbReference>
<dbReference type="GO" id="GO:0006412">
    <property type="term" value="P:translation"/>
    <property type="evidence" value="ECO:0007669"/>
    <property type="project" value="UniProtKB-UniRule"/>
</dbReference>
<dbReference type="HAMAP" id="MF_03122">
    <property type="entry name" value="Ribosomal_eS1_euk"/>
    <property type="match status" value="1"/>
</dbReference>
<dbReference type="InterPro" id="IPR001593">
    <property type="entry name" value="Ribosomal_eS1"/>
</dbReference>
<dbReference type="InterPro" id="IPR027500">
    <property type="entry name" value="Ribosomal_eS1_euk"/>
</dbReference>
<dbReference type="PANTHER" id="PTHR11830">
    <property type="entry name" value="40S RIBOSOMAL PROTEIN S3A"/>
    <property type="match status" value="1"/>
</dbReference>
<dbReference type="Pfam" id="PF01015">
    <property type="entry name" value="Ribosomal_S3Ae"/>
    <property type="match status" value="1"/>
</dbReference>
<dbReference type="SMART" id="SM01397">
    <property type="entry name" value="Ribosomal_S3Ae"/>
    <property type="match status" value="1"/>
</dbReference>
<accession>B7XMD2</accession>
<keyword id="KW-0963">Cytoplasm</keyword>
<keyword id="KW-0687">Ribonucleoprotein</keyword>
<keyword id="KW-0689">Ribosomal protein</keyword>
<evidence type="ECO:0000255" key="1">
    <source>
        <dbReference type="HAMAP-Rule" id="MF_03122"/>
    </source>
</evidence>
<evidence type="ECO:0000305" key="2"/>
<gene>
    <name evidence="1" type="primary">RPS1</name>
    <name type="ORF">EBI_21835</name>
    <name type="ORF">EBI_22052</name>
    <name type="ORF">EBI_27299</name>
</gene>
<name>RS3A_ENTBH</name>
<reference key="1">
    <citation type="journal article" date="2007" name="PLoS ONE">
        <title>Patterns of genome evolution among the microsporidian parasites Encephalitozoon cuniculi, Antonospora locustae and Enterocytozoon bieneusi.</title>
        <authorList>
            <person name="Corradi N."/>
            <person name="Akiyoshi D.E."/>
            <person name="Morrison H.G."/>
            <person name="Feng X."/>
            <person name="Weiss L.M."/>
            <person name="Tzipori S."/>
            <person name="Keeling P.J."/>
        </authorList>
    </citation>
    <scope>NUCLEOTIDE SEQUENCE [LARGE SCALE GENOMIC DNA]</scope>
    <source>
        <strain>H348</strain>
    </source>
</reference>
<reference key="2">
    <citation type="journal article" date="2009" name="PLoS Pathog.">
        <title>Genomic survey of the non-cultivatable opportunistic human pathogen, Enterocytozoon bieneusi.</title>
        <authorList>
            <person name="Akiyoshi D.E."/>
            <person name="Morrison H.G."/>
            <person name="Lei S."/>
            <person name="Feng X."/>
            <person name="Zhang Q."/>
            <person name="Corradi N."/>
            <person name="Mayanja H."/>
            <person name="Tumwine J.K."/>
            <person name="Keeling P.J."/>
            <person name="Weiss L.M."/>
            <person name="Tzipori S."/>
        </authorList>
    </citation>
    <scope>NUCLEOTIDE SEQUENCE [LARGE SCALE GENOMIC DNA]</scope>
    <source>
        <strain>H348</strain>
    </source>
</reference>
<proteinExistence type="inferred from homology"/>
<sequence>MAIRAAGTYVSKNKGAKRGKAKGKENRFSKNKFYNLTSRLFPITNHGTTSHPKMRSKQDLTPFLVGRTFSVNQGDLECADPMNAVNSPRYFKFKVNAVCGNNCNSVFNGMEVSREKITGMIRKWHTLIEANIPITTKDGSTWRVFVNAVTKKKNPDSLKHYAKASEIKIIRKRIVETTLEHLDGIEVEKLVKVLSTEGLAKEFETRCNEIYPIFAMIIKVKPIKNMQCIIVKTRSDDPAHLESDNKSDLENE</sequence>
<feature type="chain" id="PRO_0000389378" description="Small ribosomal subunit protein eS1">
    <location>
        <begin position="1"/>
        <end position="252"/>
    </location>
</feature>